<accession>Q6N1I5</accession>
<name>SLYX_RHOPA</name>
<organism>
    <name type="scientific">Rhodopseudomonas palustris (strain ATCC BAA-98 / CGA009)</name>
    <dbReference type="NCBI Taxonomy" id="258594"/>
    <lineage>
        <taxon>Bacteria</taxon>
        <taxon>Pseudomonadati</taxon>
        <taxon>Pseudomonadota</taxon>
        <taxon>Alphaproteobacteria</taxon>
        <taxon>Hyphomicrobiales</taxon>
        <taxon>Nitrobacteraceae</taxon>
        <taxon>Rhodopseudomonas</taxon>
    </lineage>
</organism>
<proteinExistence type="inferred from homology"/>
<feature type="chain" id="PRO_0000227079" description="Protein SlyX homolog">
    <location>
        <begin position="1"/>
        <end position="71"/>
    </location>
</feature>
<feature type="region of interest" description="Disordered" evidence="2">
    <location>
        <begin position="52"/>
        <end position="71"/>
    </location>
</feature>
<dbReference type="EMBL" id="BX572607">
    <property type="protein sequence ID" value="CAE29861.1"/>
    <property type="molecule type" value="Genomic_DNA"/>
</dbReference>
<dbReference type="RefSeq" id="WP_011159954.1">
    <property type="nucleotide sequence ID" value="NZ_CP116810.1"/>
</dbReference>
<dbReference type="SMR" id="Q6N1I5"/>
<dbReference type="STRING" id="258594.RPA4420"/>
<dbReference type="eggNOG" id="COG2900">
    <property type="taxonomic scope" value="Bacteria"/>
</dbReference>
<dbReference type="HOGENOM" id="CLU_180796_5_3_5"/>
<dbReference type="PhylomeDB" id="Q6N1I5"/>
<dbReference type="Gene3D" id="1.20.5.300">
    <property type="match status" value="1"/>
</dbReference>
<dbReference type="HAMAP" id="MF_00715">
    <property type="entry name" value="SlyX"/>
    <property type="match status" value="1"/>
</dbReference>
<dbReference type="InterPro" id="IPR007236">
    <property type="entry name" value="SlyX"/>
</dbReference>
<dbReference type="PANTHER" id="PTHR36508">
    <property type="entry name" value="PROTEIN SLYX"/>
    <property type="match status" value="1"/>
</dbReference>
<dbReference type="PANTHER" id="PTHR36508:SF1">
    <property type="entry name" value="PROTEIN SLYX"/>
    <property type="match status" value="1"/>
</dbReference>
<dbReference type="Pfam" id="PF04102">
    <property type="entry name" value="SlyX"/>
    <property type="match status" value="1"/>
</dbReference>
<dbReference type="SUPFAM" id="SSF144266">
    <property type="entry name" value="MPN010-like"/>
    <property type="match status" value="1"/>
</dbReference>
<reference key="1">
    <citation type="journal article" date="2004" name="Nat. Biotechnol.">
        <title>Complete genome sequence of the metabolically versatile photosynthetic bacterium Rhodopseudomonas palustris.</title>
        <authorList>
            <person name="Larimer F.W."/>
            <person name="Chain P."/>
            <person name="Hauser L."/>
            <person name="Lamerdin J.E."/>
            <person name="Malfatti S."/>
            <person name="Do L."/>
            <person name="Land M.L."/>
            <person name="Pelletier D.A."/>
            <person name="Beatty J.T."/>
            <person name="Lang A.S."/>
            <person name="Tabita F.R."/>
            <person name="Gibson J.L."/>
            <person name="Hanson T.E."/>
            <person name="Bobst C."/>
            <person name="Torres y Torres J.L."/>
            <person name="Peres C."/>
            <person name="Harrison F.H."/>
            <person name="Gibson J."/>
            <person name="Harwood C.S."/>
        </authorList>
    </citation>
    <scope>NUCLEOTIDE SEQUENCE [LARGE SCALE GENOMIC DNA]</scope>
    <source>
        <strain>ATCC BAA-98 / CGA009</strain>
    </source>
</reference>
<comment type="similarity">
    <text evidence="1">Belongs to the SlyX family.</text>
</comment>
<gene>
    <name evidence="1" type="primary">slyX</name>
    <name type="ordered locus">RPA4420</name>
</gene>
<protein>
    <recommendedName>
        <fullName evidence="1">Protein SlyX homolog</fullName>
    </recommendedName>
</protein>
<evidence type="ECO:0000255" key="1">
    <source>
        <dbReference type="HAMAP-Rule" id="MF_00715"/>
    </source>
</evidence>
<evidence type="ECO:0000256" key="2">
    <source>
        <dbReference type="SAM" id="MobiDB-lite"/>
    </source>
</evidence>
<sequence>MAGENDLNDRVEALEVRLAYQDETIEALNQTVTAQWKQIDALTRQLAALSERLDQAESSAGAPANERPPHY</sequence>